<keyword id="KW-0326">Glycosidase</keyword>
<keyword id="KW-0378">Hydrolase</keyword>
<feature type="chain" id="PRO_1000024410" description="Non-specific ribonucleoside hydrolase RihC">
    <location>
        <begin position="1"/>
        <end position="304"/>
    </location>
</feature>
<feature type="active site" evidence="1">
    <location>
        <position position="233"/>
    </location>
</feature>
<name>RIHC_SHIF8</name>
<gene>
    <name evidence="1" type="primary">rihC</name>
    <name type="ordered locus">SFV_0024</name>
</gene>
<comment type="function">
    <text evidence="1">Hydrolyzes both purine and pyrimidine ribonucleosides with a broad-substrate specificity.</text>
</comment>
<comment type="similarity">
    <text evidence="1">Belongs to the IUNH family. RihC subfamily.</text>
</comment>
<dbReference type="EC" id="3.2.-.-" evidence="1"/>
<dbReference type="EMBL" id="CP000266">
    <property type="protein sequence ID" value="ABF02312.1"/>
    <property type="molecule type" value="Genomic_DNA"/>
</dbReference>
<dbReference type="RefSeq" id="WP_001239124.1">
    <property type="nucleotide sequence ID" value="NC_008258.1"/>
</dbReference>
<dbReference type="SMR" id="Q0T8G4"/>
<dbReference type="KEGG" id="sfv:SFV_0024"/>
<dbReference type="HOGENOM" id="CLU_036838_2_2_6"/>
<dbReference type="Proteomes" id="UP000000659">
    <property type="component" value="Chromosome"/>
</dbReference>
<dbReference type="GO" id="GO:0005829">
    <property type="term" value="C:cytosol"/>
    <property type="evidence" value="ECO:0007669"/>
    <property type="project" value="TreeGrafter"/>
</dbReference>
<dbReference type="GO" id="GO:0008477">
    <property type="term" value="F:purine nucleosidase activity"/>
    <property type="evidence" value="ECO:0007669"/>
    <property type="project" value="TreeGrafter"/>
</dbReference>
<dbReference type="GO" id="GO:0045437">
    <property type="term" value="F:uridine nucleosidase activity"/>
    <property type="evidence" value="ECO:0007669"/>
    <property type="project" value="UniProtKB-ARBA"/>
</dbReference>
<dbReference type="GO" id="GO:0006144">
    <property type="term" value="P:purine nucleobase metabolic process"/>
    <property type="evidence" value="ECO:0007669"/>
    <property type="project" value="UniProtKB-UniRule"/>
</dbReference>
<dbReference type="GO" id="GO:0006152">
    <property type="term" value="P:purine nucleoside catabolic process"/>
    <property type="evidence" value="ECO:0007669"/>
    <property type="project" value="TreeGrafter"/>
</dbReference>
<dbReference type="GO" id="GO:0006206">
    <property type="term" value="P:pyrimidine nucleobase metabolic process"/>
    <property type="evidence" value="ECO:0007669"/>
    <property type="project" value="UniProtKB-UniRule"/>
</dbReference>
<dbReference type="CDD" id="cd02651">
    <property type="entry name" value="nuc_hydro_IU_UC_XIUA"/>
    <property type="match status" value="1"/>
</dbReference>
<dbReference type="FunFam" id="3.90.245.10:FF:000002">
    <property type="entry name" value="Non-specific ribonucleoside hydrolase RihC"/>
    <property type="match status" value="1"/>
</dbReference>
<dbReference type="Gene3D" id="3.90.245.10">
    <property type="entry name" value="Ribonucleoside hydrolase-like"/>
    <property type="match status" value="1"/>
</dbReference>
<dbReference type="HAMAP" id="MF_01432">
    <property type="entry name" value="Nucleosid_hydro_RihC"/>
    <property type="match status" value="1"/>
</dbReference>
<dbReference type="InterPro" id="IPR015910">
    <property type="entry name" value="I/U_nuclsd_hydro_CS"/>
</dbReference>
<dbReference type="InterPro" id="IPR001910">
    <property type="entry name" value="Inosine/uridine_hydrolase_dom"/>
</dbReference>
<dbReference type="InterPro" id="IPR023186">
    <property type="entry name" value="IUNH"/>
</dbReference>
<dbReference type="InterPro" id="IPR022976">
    <property type="entry name" value="Nucleosid_hydro_RihC_nonspecif"/>
</dbReference>
<dbReference type="InterPro" id="IPR036452">
    <property type="entry name" value="Ribo_hydro-like"/>
</dbReference>
<dbReference type="NCBIfam" id="NF008036">
    <property type="entry name" value="PRK10768.1"/>
    <property type="match status" value="1"/>
</dbReference>
<dbReference type="PANTHER" id="PTHR12304">
    <property type="entry name" value="INOSINE-URIDINE PREFERRING NUCLEOSIDE HYDROLASE"/>
    <property type="match status" value="1"/>
</dbReference>
<dbReference type="PANTHER" id="PTHR12304:SF15">
    <property type="entry name" value="NON-SPECIFIC RIBONUCLEOSIDE HYDROLASE RIHC"/>
    <property type="match status" value="1"/>
</dbReference>
<dbReference type="Pfam" id="PF01156">
    <property type="entry name" value="IU_nuc_hydro"/>
    <property type="match status" value="1"/>
</dbReference>
<dbReference type="SUPFAM" id="SSF53590">
    <property type="entry name" value="Nucleoside hydrolase"/>
    <property type="match status" value="1"/>
</dbReference>
<dbReference type="PROSITE" id="PS01247">
    <property type="entry name" value="IUNH"/>
    <property type="match status" value="1"/>
</dbReference>
<evidence type="ECO:0000255" key="1">
    <source>
        <dbReference type="HAMAP-Rule" id="MF_01432"/>
    </source>
</evidence>
<proteinExistence type="inferred from homology"/>
<reference key="1">
    <citation type="journal article" date="2006" name="BMC Genomics">
        <title>Complete genome sequence of Shigella flexneri 5b and comparison with Shigella flexneri 2a.</title>
        <authorList>
            <person name="Nie H."/>
            <person name="Yang F."/>
            <person name="Zhang X."/>
            <person name="Yang J."/>
            <person name="Chen L."/>
            <person name="Wang J."/>
            <person name="Xiong Z."/>
            <person name="Peng J."/>
            <person name="Sun L."/>
            <person name="Dong J."/>
            <person name="Xue Y."/>
            <person name="Xu X."/>
            <person name="Chen S."/>
            <person name="Yao Z."/>
            <person name="Shen Y."/>
            <person name="Jin Q."/>
        </authorList>
    </citation>
    <scope>NUCLEOTIDE SEQUENCE [LARGE SCALE GENOMIC DNA]</scope>
    <source>
        <strain>8401</strain>
    </source>
</reference>
<accession>Q0T8G4</accession>
<organism>
    <name type="scientific">Shigella flexneri serotype 5b (strain 8401)</name>
    <dbReference type="NCBI Taxonomy" id="373384"/>
    <lineage>
        <taxon>Bacteria</taxon>
        <taxon>Pseudomonadati</taxon>
        <taxon>Pseudomonadota</taxon>
        <taxon>Gammaproteobacteria</taxon>
        <taxon>Enterobacterales</taxon>
        <taxon>Enterobacteriaceae</taxon>
        <taxon>Shigella</taxon>
    </lineage>
</organism>
<sequence>MRLPIFLDTDPGIDDAVAIAAAIFAPELDLQLMTTVAGNVSVEKTTRNALQLLHFWNAEIPLAQGAAVPLVRAPRDAASVHGESGMAGYDFVEHNRKPLGIPAFLAIRDALMRAPEPVTLVAIGPLTNIALLLLQCPECKPYIRRLVIMGGSAGRGNCTPNAEFNIAADPEAAACVFRSGIEIVMCGLDVTNQAILTPDYLATLPELNRTGKMLHALFSHYRSGSMQSGLRMHDLCAIAWLVRPDLFTLKPCFVAVETQGEFTSGTTVVDIDGCLGKPANVQVALDLNVKGFQQWVAEVLALVP</sequence>
<protein>
    <recommendedName>
        <fullName evidence="1">Non-specific ribonucleoside hydrolase RihC</fullName>
        <ecNumber evidence="1">3.2.-.-</ecNumber>
    </recommendedName>
    <alternativeName>
        <fullName evidence="1">Purine/pyrimidine ribonucleoside hydrolase</fullName>
    </alternativeName>
</protein>